<organism>
    <name type="scientific">Buthus sp. (strain IY-2001)</name>
    <name type="common">Scorpion</name>
    <dbReference type="NCBI Taxonomy" id="411873"/>
    <lineage>
        <taxon>Eukaryota</taxon>
        <taxon>Metazoa</taxon>
        <taxon>Ecdysozoa</taxon>
        <taxon>Arthropoda</taxon>
        <taxon>Chelicerata</taxon>
        <taxon>Arachnida</taxon>
        <taxon>Scorpiones</taxon>
        <taxon>Buthida</taxon>
        <taxon>Buthoidea</taxon>
        <taxon>Buthidae</taxon>
        <taxon>Buthus</taxon>
    </lineage>
</organism>
<feature type="chain" id="PRO_0000262968" description="Neurotoxin" evidence="2">
    <location>
        <begin position="1"/>
        <end position="35"/>
    </location>
</feature>
<feature type="disulfide bond" evidence="1">
    <location>
        <begin position="7"/>
        <end position="27"/>
    </location>
</feature>
<feature type="disulfide bond" evidence="1">
    <location>
        <begin position="14"/>
        <end position="32"/>
    </location>
</feature>
<feature type="disulfide bond" evidence="1">
    <location>
        <begin position="18"/>
        <end position="34"/>
    </location>
</feature>
<accession>P83108</accession>
<sequence length="35" mass="3831">VSIGIKCDPSIDLCEGQCRIRYFTGYCSGDTCHCS</sequence>
<proteinExistence type="evidence at protein level"/>
<keyword id="KW-0903">Direct protein sequencing</keyword>
<keyword id="KW-1015">Disulfide bond</keyword>
<keyword id="KW-0528">Neurotoxin</keyword>
<keyword id="KW-0964">Secreted</keyword>
<keyword id="KW-0800">Toxin</keyword>
<dbReference type="SMR" id="P83108"/>
<dbReference type="GO" id="GO:0005576">
    <property type="term" value="C:extracellular region"/>
    <property type="evidence" value="ECO:0007669"/>
    <property type="project" value="UniProtKB-SubCell"/>
</dbReference>
<dbReference type="GO" id="GO:0090729">
    <property type="term" value="F:toxin activity"/>
    <property type="evidence" value="ECO:0007669"/>
    <property type="project" value="UniProtKB-KW"/>
</dbReference>
<evidence type="ECO:0000250" key="1">
    <source>
        <dbReference type="UniProtKB" id="P0CJ17"/>
    </source>
</evidence>
<evidence type="ECO:0000269" key="2">
    <source ref="1"/>
</evidence>
<evidence type="ECO:0000305" key="3">
    <source ref="1"/>
</evidence>
<comment type="function">
    <text evidence="2">Neurotoxin. Decreases the action potential of myelinated nerves in mice and frogs.</text>
</comment>
<comment type="subcellular location">
    <subcellularLocation>
        <location evidence="2">Secreted</location>
    </subcellularLocation>
</comment>
<comment type="tissue specificity">
    <text evidence="3">Expressed by the venom gland.</text>
</comment>
<name>TX1_BUTSQ</name>
<reference key="1">
    <citation type="submission" date="2001-08" db="UniProtKB">
        <title>Two new neurotoxic peptides isolated from Vietnamese scorpion Buthus sp.</title>
        <authorList>
            <person name="Hoang N.A."/>
            <person name="Egorov T.A."/>
            <person name="Yamskov I.A."/>
        </authorList>
    </citation>
    <scope>PROTEIN SEQUENCE</scope>
    <scope>FUNCTION</scope>
    <scope>SUBCELLULAR LOCATION</scope>
    <source>
        <tissue>Venom</tissue>
    </source>
</reference>
<protein>
    <recommendedName>
        <fullName>Neurotoxin</fullName>
    </recommendedName>
</protein>